<comment type="catalytic activity">
    <reaction evidence="1">
        <text>5-amino-1-(5-phospho-D-ribosyl)imidazole-4-carboxylate + L-aspartate + ATP = (2S)-2-[5-amino-1-(5-phospho-beta-D-ribosyl)imidazole-4-carboxamido]succinate + ADP + phosphate + 2 H(+)</text>
        <dbReference type="Rhea" id="RHEA:22628"/>
        <dbReference type="ChEBI" id="CHEBI:15378"/>
        <dbReference type="ChEBI" id="CHEBI:29991"/>
        <dbReference type="ChEBI" id="CHEBI:30616"/>
        <dbReference type="ChEBI" id="CHEBI:43474"/>
        <dbReference type="ChEBI" id="CHEBI:58443"/>
        <dbReference type="ChEBI" id="CHEBI:77657"/>
        <dbReference type="ChEBI" id="CHEBI:456216"/>
        <dbReference type="EC" id="6.3.2.6"/>
    </reaction>
</comment>
<comment type="pathway">
    <text evidence="1">Purine metabolism; IMP biosynthesis via de novo pathway; 5-amino-1-(5-phospho-D-ribosyl)imidazole-4-carboxamide from 5-amino-1-(5-phospho-D-ribosyl)imidazole-4-carboxylate: step 1/2.</text>
</comment>
<comment type="similarity">
    <text evidence="1">Belongs to the SAICAR synthetase family.</text>
</comment>
<protein>
    <recommendedName>
        <fullName evidence="1">Phosphoribosylaminoimidazole-succinocarboxamide synthase</fullName>
        <ecNumber evidence="1">6.3.2.6</ecNumber>
    </recommendedName>
    <alternativeName>
        <fullName evidence="1">SAICAR synthetase</fullName>
    </alternativeName>
</protein>
<feature type="chain" id="PRO_0000100884" description="Phosphoribosylaminoimidazole-succinocarboxamide synthase">
    <location>
        <begin position="1"/>
        <end position="234"/>
    </location>
</feature>
<gene>
    <name evidence="1" type="primary">purC</name>
    <name type="ordered locus">SpyM3_0019</name>
</gene>
<reference key="1">
    <citation type="journal article" date="2002" name="Proc. Natl. Acad. Sci. U.S.A.">
        <title>Genome sequence of a serotype M3 strain of group A Streptococcus: phage-encoded toxins, the high-virulence phenotype, and clone emergence.</title>
        <authorList>
            <person name="Beres S.B."/>
            <person name="Sylva G.L."/>
            <person name="Barbian K.D."/>
            <person name="Lei B."/>
            <person name="Hoff J.S."/>
            <person name="Mammarella N.D."/>
            <person name="Liu M.-Y."/>
            <person name="Smoot J.C."/>
            <person name="Porcella S.F."/>
            <person name="Parkins L.D."/>
            <person name="Campbell D.S."/>
            <person name="Smith T.M."/>
            <person name="McCormick J.K."/>
            <person name="Leung D.Y.M."/>
            <person name="Schlievert P.M."/>
            <person name="Musser J.M."/>
        </authorList>
    </citation>
    <scope>NUCLEOTIDE SEQUENCE [LARGE SCALE GENOMIC DNA]</scope>
    <source>
        <strain>ATCC BAA-595 / MGAS315</strain>
    </source>
</reference>
<sequence length="234" mass="26873">MTNQLIYKGKAKDIYSTKDENVIRTVYKDQATMLNGARKETIDGKGALNNQISSLIFEKLNKAGVATHYIEQISKNEQLNKKVDIIPLEVVLRNVTAGSFSKRFGVEEGRVLETPIVEFYYKNDDLNDPFINDEHVKFLGIVNDEEIAYLKGETRRINELLKCWFAQIGLNLIDFKLEFGFDQEGTIILADEFSPDNCRLWDKNGNHMDKDVFRRDLGNLTDVYQVVLEKLIAL</sequence>
<dbReference type="EC" id="6.3.2.6" evidence="1"/>
<dbReference type="EMBL" id="AE014074">
    <property type="protein sequence ID" value="AAM78626.1"/>
    <property type="molecule type" value="Genomic_DNA"/>
</dbReference>
<dbReference type="RefSeq" id="WP_011054091.1">
    <property type="nucleotide sequence ID" value="NC_004070.1"/>
</dbReference>
<dbReference type="SMR" id="P0DD56"/>
<dbReference type="KEGG" id="spg:SpyM3_0019"/>
<dbReference type="HOGENOM" id="CLU_061495_2_0_9"/>
<dbReference type="UniPathway" id="UPA00074">
    <property type="reaction ID" value="UER00131"/>
</dbReference>
<dbReference type="Proteomes" id="UP000000564">
    <property type="component" value="Chromosome"/>
</dbReference>
<dbReference type="GO" id="GO:0005524">
    <property type="term" value="F:ATP binding"/>
    <property type="evidence" value="ECO:0007669"/>
    <property type="project" value="UniProtKB-KW"/>
</dbReference>
<dbReference type="GO" id="GO:0004639">
    <property type="term" value="F:phosphoribosylaminoimidazolesuccinocarboxamide synthase activity"/>
    <property type="evidence" value="ECO:0007669"/>
    <property type="project" value="UniProtKB-UniRule"/>
</dbReference>
<dbReference type="GO" id="GO:0006189">
    <property type="term" value="P:'de novo' IMP biosynthetic process"/>
    <property type="evidence" value="ECO:0007669"/>
    <property type="project" value="UniProtKB-UniRule"/>
</dbReference>
<dbReference type="GO" id="GO:0009236">
    <property type="term" value="P:cobalamin biosynthetic process"/>
    <property type="evidence" value="ECO:0007669"/>
    <property type="project" value="InterPro"/>
</dbReference>
<dbReference type="CDD" id="cd01415">
    <property type="entry name" value="SAICAR_synt_PurC"/>
    <property type="match status" value="1"/>
</dbReference>
<dbReference type="FunFam" id="3.30.470.20:FF:000006">
    <property type="entry name" value="Phosphoribosylaminoimidazole-succinocarboxamide synthase"/>
    <property type="match status" value="1"/>
</dbReference>
<dbReference type="Gene3D" id="3.30.470.20">
    <property type="entry name" value="ATP-grasp fold, B domain"/>
    <property type="match status" value="1"/>
</dbReference>
<dbReference type="Gene3D" id="3.30.200.20">
    <property type="entry name" value="Phosphorylase Kinase, domain 1"/>
    <property type="match status" value="1"/>
</dbReference>
<dbReference type="HAMAP" id="MF_00137">
    <property type="entry name" value="SAICAR_synth"/>
    <property type="match status" value="1"/>
</dbReference>
<dbReference type="InterPro" id="IPR028923">
    <property type="entry name" value="SAICAR_synt/ADE2_N"/>
</dbReference>
<dbReference type="InterPro" id="IPR033934">
    <property type="entry name" value="SAICAR_synt_PurC"/>
</dbReference>
<dbReference type="InterPro" id="IPR001636">
    <property type="entry name" value="SAICAR_synth"/>
</dbReference>
<dbReference type="InterPro" id="IPR050089">
    <property type="entry name" value="SAICAR_synthetase"/>
</dbReference>
<dbReference type="InterPro" id="IPR018236">
    <property type="entry name" value="SAICAR_synthetase_CS"/>
</dbReference>
<dbReference type="NCBIfam" id="TIGR00081">
    <property type="entry name" value="purC"/>
    <property type="match status" value="1"/>
</dbReference>
<dbReference type="PANTHER" id="PTHR43599">
    <property type="entry name" value="MULTIFUNCTIONAL PROTEIN ADE2"/>
    <property type="match status" value="1"/>
</dbReference>
<dbReference type="PANTHER" id="PTHR43599:SF3">
    <property type="entry name" value="SI:DKEY-6E2.2"/>
    <property type="match status" value="1"/>
</dbReference>
<dbReference type="Pfam" id="PF01259">
    <property type="entry name" value="SAICAR_synt"/>
    <property type="match status" value="1"/>
</dbReference>
<dbReference type="SUPFAM" id="SSF56104">
    <property type="entry name" value="SAICAR synthase-like"/>
    <property type="match status" value="1"/>
</dbReference>
<dbReference type="PROSITE" id="PS01057">
    <property type="entry name" value="SAICAR_SYNTHETASE_1"/>
    <property type="match status" value="1"/>
</dbReference>
<dbReference type="PROSITE" id="PS01058">
    <property type="entry name" value="SAICAR_SYNTHETASE_2"/>
    <property type="match status" value="1"/>
</dbReference>
<evidence type="ECO:0000255" key="1">
    <source>
        <dbReference type="HAMAP-Rule" id="MF_00137"/>
    </source>
</evidence>
<proteinExistence type="inferred from homology"/>
<name>PUR7_STRP3</name>
<organism>
    <name type="scientific">Streptococcus pyogenes serotype M3 (strain ATCC BAA-595 / MGAS315)</name>
    <dbReference type="NCBI Taxonomy" id="198466"/>
    <lineage>
        <taxon>Bacteria</taxon>
        <taxon>Bacillati</taxon>
        <taxon>Bacillota</taxon>
        <taxon>Bacilli</taxon>
        <taxon>Lactobacillales</taxon>
        <taxon>Streptococcaceae</taxon>
        <taxon>Streptococcus</taxon>
    </lineage>
</organism>
<keyword id="KW-0067">ATP-binding</keyword>
<keyword id="KW-0436">Ligase</keyword>
<keyword id="KW-0547">Nucleotide-binding</keyword>
<keyword id="KW-0658">Purine biosynthesis</keyword>
<accession>P0DD56</accession>
<accession>Q8K8Z0</accession>